<keyword id="KW-0275">Fatty acid biosynthesis</keyword>
<keyword id="KW-0276">Fatty acid metabolism</keyword>
<keyword id="KW-0408">Iron</keyword>
<keyword id="KW-0444">Lipid biosynthesis</keyword>
<keyword id="KW-0443">Lipid metabolism</keyword>
<keyword id="KW-0472">Membrane</keyword>
<keyword id="KW-0560">Oxidoreductase</keyword>
<keyword id="KW-1185">Reference proteome</keyword>
<keyword id="KW-0812">Transmembrane</keyword>
<keyword id="KW-1133">Transmembrane helix</keyword>
<name>DESA_PICP2</name>
<organism>
    <name type="scientific">Picosynechococcus sp. (strain ATCC 27264 / PCC 7002 / PR-6)</name>
    <name type="common">Agmenellum quadruplicatum</name>
    <dbReference type="NCBI Taxonomy" id="32049"/>
    <lineage>
        <taxon>Bacteria</taxon>
        <taxon>Bacillati</taxon>
        <taxon>Cyanobacteriota</taxon>
        <taxon>Cyanophyceae</taxon>
        <taxon>Oscillatoriophycideae</taxon>
        <taxon>Chroococcales</taxon>
        <taxon>Geminocystaceae</taxon>
        <taxon>Picosynechococcus</taxon>
    </lineage>
</organism>
<comment type="function">
    <text evidence="4">Desaturase involved in fatty acid biosynthesis (PubMed:8155883). Introduces a double bond at carbon 12 of oleoyl groups (18:1) attached to the sn-1 position of the glycerol moiety of membrane glycerolipids (PubMed:8155883). Can also efficiently catalyze the desaturation of palmitoleic acid (16:1) in vitro (PubMed:8155883).</text>
</comment>
<comment type="catalytic activity">
    <reaction evidence="4">
        <text>a 1-[(9Z)-octadecenoyl]-2-acyl-glycerolipid + 2 reduced [2Fe-2S]-[ferredoxin] + O2 + 2 H(+) = a 1-[(9Z,12Z)-octadecdienoyl]-2-acyl-glycerolipid + 2 oxidized [2Fe-2S]-[ferredoxin] + 2 H2O</text>
        <dbReference type="Rhea" id="RHEA:46776"/>
        <dbReference type="Rhea" id="RHEA-COMP:10000"/>
        <dbReference type="Rhea" id="RHEA-COMP:10001"/>
        <dbReference type="ChEBI" id="CHEBI:15377"/>
        <dbReference type="ChEBI" id="CHEBI:15378"/>
        <dbReference type="ChEBI" id="CHEBI:15379"/>
        <dbReference type="ChEBI" id="CHEBI:33737"/>
        <dbReference type="ChEBI" id="CHEBI:33738"/>
        <dbReference type="ChEBI" id="CHEBI:87008"/>
        <dbReference type="ChEBI" id="CHEBI:87010"/>
        <dbReference type="EC" id="1.14.19.45"/>
    </reaction>
    <physiologicalReaction direction="left-to-right" evidence="4">
        <dbReference type="Rhea" id="RHEA:46777"/>
    </physiologicalReaction>
</comment>
<comment type="cofactor">
    <cofactor evidence="1">
        <name>Fe(2+)</name>
        <dbReference type="ChEBI" id="CHEBI:29033"/>
    </cofactor>
</comment>
<comment type="pathway">
    <text evidence="4">Lipid metabolism; polyunsaturated fatty acid biosynthesis.</text>
</comment>
<comment type="subcellular location">
    <subcellularLocation>
        <location evidence="3">Membrane</location>
        <topology evidence="3">Multi-pass membrane protein</topology>
    </subcellularLocation>
</comment>
<comment type="domain">
    <text evidence="1">The histidine box domains are involved in binding the catalytic metal ions.</text>
</comment>
<comment type="similarity">
    <text evidence="6">Belongs to the fatty acid desaturase type 2 family.</text>
</comment>
<proteinExistence type="evidence at protein level"/>
<accession>Q55231</accession>
<accession>Q79CI2</accession>
<dbReference type="EC" id="1.14.19.45" evidence="4"/>
<dbReference type="EMBL" id="D13779">
    <property type="protein sequence ID" value="BAA02922.1"/>
    <property type="molecule type" value="Genomic_DNA"/>
</dbReference>
<dbReference type="EMBL" id="U36388">
    <property type="protein sequence ID" value="AAF21445.1"/>
    <property type="molecule type" value="Genomic_DNA"/>
</dbReference>
<dbReference type="EMBL" id="CP000951">
    <property type="protein sequence ID" value="ACB00730.1"/>
    <property type="molecule type" value="Genomic_DNA"/>
</dbReference>
<dbReference type="PIR" id="S43771">
    <property type="entry name" value="S43771"/>
</dbReference>
<dbReference type="RefSeq" id="WP_012308348.1">
    <property type="nucleotide sequence ID" value="NZ_JAHHPU010000003.1"/>
</dbReference>
<dbReference type="SMR" id="Q55231"/>
<dbReference type="STRING" id="32049.SYNPCC7002_A2756"/>
<dbReference type="KEGG" id="syp:SYNPCC7002_A2756"/>
<dbReference type="eggNOG" id="COG3239">
    <property type="taxonomic scope" value="Bacteria"/>
</dbReference>
<dbReference type="HOGENOM" id="CLU_033094_3_1_3"/>
<dbReference type="BRENDA" id="1.14.19.6">
    <property type="organism ID" value="6187"/>
</dbReference>
<dbReference type="UniPathway" id="UPA00658"/>
<dbReference type="Proteomes" id="UP000001688">
    <property type="component" value="Chromosome"/>
</dbReference>
<dbReference type="GO" id="GO:0016020">
    <property type="term" value="C:membrane"/>
    <property type="evidence" value="ECO:0007669"/>
    <property type="project" value="UniProtKB-SubCell"/>
</dbReference>
<dbReference type="GO" id="GO:0016491">
    <property type="term" value="F:oxidoreductase activity"/>
    <property type="evidence" value="ECO:0007669"/>
    <property type="project" value="UniProtKB-KW"/>
</dbReference>
<dbReference type="GO" id="GO:0006636">
    <property type="term" value="P:unsaturated fatty acid biosynthetic process"/>
    <property type="evidence" value="ECO:0007669"/>
    <property type="project" value="UniProtKB-UniPathway"/>
</dbReference>
<dbReference type="CDD" id="cd03507">
    <property type="entry name" value="Delta12-FADS-like"/>
    <property type="match status" value="1"/>
</dbReference>
<dbReference type="InterPro" id="IPR005804">
    <property type="entry name" value="FA_desaturase_dom"/>
</dbReference>
<dbReference type="InterPro" id="IPR012171">
    <property type="entry name" value="Fatty_acid_desaturase"/>
</dbReference>
<dbReference type="PANTHER" id="PTHR32100">
    <property type="entry name" value="OMEGA-6 FATTY ACID DESATURASE, CHLOROPLASTIC"/>
    <property type="match status" value="1"/>
</dbReference>
<dbReference type="Pfam" id="PF00487">
    <property type="entry name" value="FA_desaturase"/>
    <property type="match status" value="1"/>
</dbReference>
<protein>
    <recommendedName>
        <fullName evidence="6">sn-1 oleoyl-lipid 12-desaturase</fullName>
        <ecNumber evidence="4">1.14.19.45</ecNumber>
    </recommendedName>
    <alternativeName>
        <fullName evidence="6">Delta(12)-fatty-acid desaturase</fullName>
    </alternativeName>
</protein>
<evidence type="ECO:0000250" key="1">
    <source>
        <dbReference type="UniProtKB" id="O00767"/>
    </source>
</evidence>
<evidence type="ECO:0000250" key="2">
    <source>
        <dbReference type="UniProtKB" id="Q54795"/>
    </source>
</evidence>
<evidence type="ECO:0000255" key="3"/>
<evidence type="ECO:0000269" key="4">
    <source>
    </source>
</evidence>
<evidence type="ECO:0000303" key="5">
    <source>
    </source>
</evidence>
<evidence type="ECO:0000305" key="6"/>
<evidence type="ECO:0000312" key="7">
    <source>
        <dbReference type="EMBL" id="AAF21445.1"/>
    </source>
</evidence>
<evidence type="ECO:0000312" key="8">
    <source>
        <dbReference type="EMBL" id="ACB00730.1"/>
    </source>
</evidence>
<evidence type="ECO:0000312" key="9">
    <source>
        <dbReference type="EMBL" id="BAA02922.1"/>
    </source>
</evidence>
<sequence>MTSVTVRPSATTLLEKHPNLRLRDILDTLPRSVYEINPLKAWSRVLLSVAAVVGCYALLAIAPWYLLLPVWFLTGTTLTGFFVIGHDCGHRSFSRKNWVNNLVGHLAFLPLIYPFHSWRILHNHHHRYTNNMDEDNAWAPFTPELYDDSPAFIKAVYRAIRGKLWWLASVIHQLKLHFNWFAFEGKQREQVRFSALFVIIAGAIAFPVMFYTLGVWGVVKFWLMPWLGYHFWMSTFTLVHHTVPEIPFSYRDKWNEAIAQLSGTVHCDYPKWVEVLCHDINVHVPHHLSTGIPSYNLRKAYASIKQNWGEYLYETKFSWELMKAITEQCHLYDAEHNYISFAQHQKR</sequence>
<reference evidence="9" key="1">
    <citation type="journal article" date="1994" name="Plant Mol. Biol.">
        <title>Identification of conserved domains in the delta 12 desaturases of cyanobacteria.</title>
        <authorList>
            <person name="Sakamoto T."/>
            <person name="Wada H."/>
            <person name="Nishida I."/>
            <person name="Ohmori M."/>
            <person name="Murata N."/>
        </authorList>
    </citation>
    <scope>NUCLEOTIDE SEQUENCE [GENOMIC DNA]</scope>
    <scope>FUNCTION</scope>
    <scope>CATALYTIC ACTIVITY</scope>
    <scope>PATHWAY</scope>
    <source>
        <strain>ATCC 27264 / PCC 7002 / PR-6</strain>
    </source>
</reference>
<reference evidence="7" key="2">
    <citation type="submission" date="1995-09" db="EMBL/GenBank/DDBJ databases">
        <title>Molecular characterization of the ammonium transporter gene of Synechococcus sp. PCC7002.</title>
        <authorList>
            <person name="Sakamoto T."/>
            <person name="Bryant D.A."/>
        </authorList>
    </citation>
    <scope>NUCLEOTIDE SEQUENCE [GENOMIC DNA]</scope>
</reference>
<reference key="3">
    <citation type="submission" date="2008-02" db="EMBL/GenBank/DDBJ databases">
        <title>Complete sequence of Synechococcus sp. PCC 7002.</title>
        <authorList>
            <person name="Li T."/>
            <person name="Zhao J."/>
            <person name="Zhao C."/>
            <person name="Liu Z."/>
            <person name="Zhao F."/>
            <person name="Marquardt J."/>
            <person name="Nomura C.T."/>
            <person name="Persson S."/>
            <person name="Detter J.C."/>
            <person name="Richardson P.M."/>
            <person name="Lanz C."/>
            <person name="Schuster S.C."/>
            <person name="Wang J."/>
            <person name="Li S."/>
            <person name="Huang X."/>
            <person name="Cai T."/>
            <person name="Yu Z."/>
            <person name="Luo J."/>
            <person name="Zhao J."/>
            <person name="Bryant D.A."/>
        </authorList>
    </citation>
    <scope>NUCLEOTIDE SEQUENCE [LARGE SCALE GENOMIC DNA]</scope>
    <source>
        <strain>ATCC 27264 / PCC 7002 / PR-6</strain>
    </source>
</reference>
<feature type="chain" id="PRO_0000459815" description="sn-1 oleoyl-lipid 12-desaturase">
    <location>
        <begin position="1"/>
        <end position="347"/>
    </location>
</feature>
<feature type="transmembrane region" description="Helical" evidence="3">
    <location>
        <begin position="41"/>
        <end position="63"/>
    </location>
</feature>
<feature type="transmembrane region" description="Helical" evidence="3">
    <location>
        <begin position="67"/>
        <end position="85"/>
    </location>
</feature>
<feature type="transmembrane region" description="Helical" evidence="3">
    <location>
        <begin position="98"/>
        <end position="118"/>
    </location>
</feature>
<feature type="transmembrane region" description="Helical" evidence="3">
    <location>
        <begin position="164"/>
        <end position="184"/>
    </location>
</feature>
<feature type="transmembrane region" description="Helical" evidence="3">
    <location>
        <begin position="196"/>
        <end position="216"/>
    </location>
</feature>
<feature type="transmembrane region" description="Helical" evidence="3">
    <location>
        <begin position="218"/>
        <end position="238"/>
    </location>
</feature>
<feature type="short sequence motif" description="Histidine box-1" evidence="2">
    <location>
        <begin position="86"/>
        <end position="90"/>
    </location>
</feature>
<feature type="short sequence motif" description="Histidine box-2" evidence="2">
    <location>
        <begin position="122"/>
        <end position="126"/>
    </location>
</feature>
<feature type="short sequence motif" description="Histidine box-3" evidence="2">
    <location>
        <begin position="286"/>
        <end position="290"/>
    </location>
</feature>
<gene>
    <name evidence="5" type="primary">desA</name>
    <name evidence="8" type="ordered locus">SYNPCC7002_A2756</name>
</gene>